<keyword id="KW-0413">Isomerase</keyword>
<keyword id="KW-0423">Lactose metabolism</keyword>
<feature type="chain" id="PRO_1000215502" description="Galactose-6-phosphate isomerase subunit LacB">
    <location>
        <begin position="1"/>
        <end position="171"/>
    </location>
</feature>
<protein>
    <recommendedName>
        <fullName evidence="1">Galactose-6-phosphate isomerase subunit LacB</fullName>
        <ecNumber evidence="1">5.3.1.26</ecNumber>
    </recommendedName>
</protein>
<comment type="catalytic activity">
    <reaction evidence="1">
        <text>aldehydo-D-galactose 6-phosphate = keto-D-tagatose 6-phosphate</text>
        <dbReference type="Rhea" id="RHEA:13033"/>
        <dbReference type="ChEBI" id="CHEBI:58255"/>
        <dbReference type="ChEBI" id="CHEBI:134283"/>
        <dbReference type="EC" id="5.3.1.26"/>
    </reaction>
</comment>
<comment type="pathway">
    <text evidence="1">Carbohydrate metabolism; D-galactose 6-phosphate degradation; D-tagatose 6-phosphate from D-galactose 6-phosphate: step 1/1.</text>
</comment>
<comment type="subunit">
    <text evidence="1">Heteromultimeric protein consisting of LacA and LacB.</text>
</comment>
<comment type="similarity">
    <text evidence="1">Belongs to the LacAB/RpiB family.</text>
</comment>
<name>LACB_STRS7</name>
<sequence length="171" mass="18904">MKIAIGCDHIVTDEKMAVSDFLKSKGYEVIDCGTYDHTRTHYPIFGKRVGEAVANGLADLGVCICGTGVGITNAVNKVPGIRSALVRDMTTALYAKEELNANVIGFGGKITGELLMCDIIEAFIKAEYKETEENKKLIAKIAHLESHNANQEDPDFFTEFLEKWDRGEYHD</sequence>
<dbReference type="EC" id="5.3.1.26" evidence="1"/>
<dbReference type="EMBL" id="FM204884">
    <property type="protein sequence ID" value="CAX00209.1"/>
    <property type="molecule type" value="Genomic_DNA"/>
</dbReference>
<dbReference type="SMR" id="C0MDX5"/>
<dbReference type="KEGG" id="seq:SZO_15280"/>
<dbReference type="PATRIC" id="fig|40041.11.peg.1639"/>
<dbReference type="eggNOG" id="COG0698">
    <property type="taxonomic scope" value="Bacteria"/>
</dbReference>
<dbReference type="HOGENOM" id="CLU_091396_2_0_9"/>
<dbReference type="UniPathway" id="UPA00702">
    <property type="reaction ID" value="UER00714"/>
</dbReference>
<dbReference type="Proteomes" id="UP000001368">
    <property type="component" value="Chromosome"/>
</dbReference>
<dbReference type="GO" id="GO:0050044">
    <property type="term" value="F:galactose-6-phosphate isomerase activity"/>
    <property type="evidence" value="ECO:0007669"/>
    <property type="project" value="UniProtKB-UniRule"/>
</dbReference>
<dbReference type="GO" id="GO:0004751">
    <property type="term" value="F:ribose-5-phosphate isomerase activity"/>
    <property type="evidence" value="ECO:0007669"/>
    <property type="project" value="TreeGrafter"/>
</dbReference>
<dbReference type="GO" id="GO:0019316">
    <property type="term" value="P:D-allose catabolic process"/>
    <property type="evidence" value="ECO:0007669"/>
    <property type="project" value="TreeGrafter"/>
</dbReference>
<dbReference type="GO" id="GO:0019388">
    <property type="term" value="P:galactose catabolic process"/>
    <property type="evidence" value="ECO:0007669"/>
    <property type="project" value="UniProtKB-UniPathway"/>
</dbReference>
<dbReference type="GO" id="GO:0019512">
    <property type="term" value="P:lactose catabolic process via tagatose-6-phosphate"/>
    <property type="evidence" value="ECO:0007669"/>
    <property type="project" value="UniProtKB-UniRule"/>
</dbReference>
<dbReference type="GO" id="GO:0009052">
    <property type="term" value="P:pentose-phosphate shunt, non-oxidative branch"/>
    <property type="evidence" value="ECO:0007669"/>
    <property type="project" value="TreeGrafter"/>
</dbReference>
<dbReference type="Gene3D" id="3.40.1400.10">
    <property type="entry name" value="Sugar-phosphate isomerase, RpiB/LacA/LacB"/>
    <property type="match status" value="1"/>
</dbReference>
<dbReference type="HAMAP" id="MF_01556">
    <property type="entry name" value="LacB"/>
    <property type="match status" value="1"/>
</dbReference>
<dbReference type="InterPro" id="IPR004784">
    <property type="entry name" value="LacB"/>
</dbReference>
<dbReference type="InterPro" id="IPR003500">
    <property type="entry name" value="RpiB_LacA_LacB"/>
</dbReference>
<dbReference type="InterPro" id="IPR036569">
    <property type="entry name" value="RpiB_LacA_LacB_sf"/>
</dbReference>
<dbReference type="NCBIfam" id="TIGR01119">
    <property type="entry name" value="lacB"/>
    <property type="match status" value="1"/>
</dbReference>
<dbReference type="NCBIfam" id="NF004051">
    <property type="entry name" value="PRK05571.1"/>
    <property type="match status" value="1"/>
</dbReference>
<dbReference type="NCBIfam" id="NF006381">
    <property type="entry name" value="PRK08622.1"/>
    <property type="match status" value="1"/>
</dbReference>
<dbReference type="NCBIfam" id="NF009258">
    <property type="entry name" value="PRK12615.1"/>
    <property type="match status" value="1"/>
</dbReference>
<dbReference type="NCBIfam" id="TIGR00689">
    <property type="entry name" value="rpiB_lacA_lacB"/>
    <property type="match status" value="1"/>
</dbReference>
<dbReference type="PANTHER" id="PTHR30345:SF0">
    <property type="entry name" value="DNA DAMAGE-REPAIR_TOLERATION PROTEIN DRT102"/>
    <property type="match status" value="1"/>
</dbReference>
<dbReference type="PANTHER" id="PTHR30345">
    <property type="entry name" value="RIBOSE-5-PHOSPHATE ISOMERASE B"/>
    <property type="match status" value="1"/>
</dbReference>
<dbReference type="Pfam" id="PF02502">
    <property type="entry name" value="LacAB_rpiB"/>
    <property type="match status" value="1"/>
</dbReference>
<dbReference type="PIRSF" id="PIRSF005384">
    <property type="entry name" value="RpiB_LacA_B"/>
    <property type="match status" value="1"/>
</dbReference>
<dbReference type="SUPFAM" id="SSF89623">
    <property type="entry name" value="Ribose/Galactose isomerase RpiB/AlsB"/>
    <property type="match status" value="1"/>
</dbReference>
<proteinExistence type="inferred from homology"/>
<reference key="1">
    <citation type="journal article" date="2009" name="PLoS Pathog.">
        <title>Genomic evidence for the evolution of Streptococcus equi: host restriction, increased virulence, and genetic exchange with human pathogens.</title>
        <authorList>
            <person name="Holden M.T.G."/>
            <person name="Heather Z."/>
            <person name="Paillot R."/>
            <person name="Steward K.F."/>
            <person name="Webb K."/>
            <person name="Ainslie F."/>
            <person name="Jourdan T."/>
            <person name="Bason N.C."/>
            <person name="Holroyd N.E."/>
            <person name="Mungall K."/>
            <person name="Quail M.A."/>
            <person name="Sanders M."/>
            <person name="Simmonds M."/>
            <person name="Willey D."/>
            <person name="Brooks K."/>
            <person name="Aanensen D.M."/>
            <person name="Spratt B.G."/>
            <person name="Jolley K.A."/>
            <person name="Maiden M.C.J."/>
            <person name="Kehoe M."/>
            <person name="Chanter N."/>
            <person name="Bentley S.D."/>
            <person name="Robinson C."/>
            <person name="Maskell D.J."/>
            <person name="Parkhill J."/>
            <person name="Waller A.S."/>
        </authorList>
    </citation>
    <scope>NUCLEOTIDE SEQUENCE [LARGE SCALE GENOMIC DNA]</scope>
    <source>
        <strain>H70</strain>
    </source>
</reference>
<organism>
    <name type="scientific">Streptococcus equi subsp. zooepidemicus (strain H70)</name>
    <dbReference type="NCBI Taxonomy" id="553483"/>
    <lineage>
        <taxon>Bacteria</taxon>
        <taxon>Bacillati</taxon>
        <taxon>Bacillota</taxon>
        <taxon>Bacilli</taxon>
        <taxon>Lactobacillales</taxon>
        <taxon>Streptococcaceae</taxon>
        <taxon>Streptococcus</taxon>
    </lineage>
</organism>
<accession>C0MDX5</accession>
<gene>
    <name evidence="1" type="primary">lacB</name>
    <name type="ordered locus">SZO_15280</name>
</gene>
<evidence type="ECO:0000255" key="1">
    <source>
        <dbReference type="HAMAP-Rule" id="MF_01556"/>
    </source>
</evidence>